<reference key="1">
    <citation type="journal article" date="2009" name="J. Bacteriol.">
        <title>Genomic sequencing reveals regulatory mutations and recombinational events in the widely used MC4100 lineage of Escherichia coli K-12.</title>
        <authorList>
            <person name="Ferenci T."/>
            <person name="Zhou Z."/>
            <person name="Betteridge T."/>
            <person name="Ren Y."/>
            <person name="Liu Y."/>
            <person name="Feng L."/>
            <person name="Reeves P.R."/>
            <person name="Wang L."/>
        </authorList>
    </citation>
    <scope>NUCLEOTIDE SEQUENCE [LARGE SCALE GENOMIC DNA]</scope>
    <source>
        <strain>K12 / MC4100 / BW2952</strain>
    </source>
</reference>
<name>ENO_ECOBW</name>
<sequence>MSKIVKIIGREIIDSRGNPTVEAEVHLEGGFVGMAAAPSGASTGSREALELRDGDKSRFLGKGVTKAVAAVNGPIAQALIGKDAKDQAGIDKIMIDLDGTENKSKFGANAILAVSLANAKAAAAAKGMPLYEHIAELNGTPGKYSMPVPMMNIINGGEHADNNVDIQEFMIQPVGAKTVKEAIRMGSEVFHHLAKVLKAKGMNTAVGDEGGYAPNLGSNAEALAVIAEAVKAAGYELGKDITLAMDCAASEFYKDGKYVLAGEGNKAFTSEEFTHFLEELTKQYPIVSIEDGLDESDWDGFAYQTKVLGDKIQLVGDDLFVTNTKILKEGIEKGIANSILIKFNQIGSLTETLAAIKMAKDAGYTAVISHRSGETEDATIADLAVGTAAGQIKTGSMSRSDRVAKYNQLIRIEEALGEKAPYNGRKEIKGQA</sequence>
<dbReference type="EC" id="4.2.1.11" evidence="1"/>
<dbReference type="EMBL" id="CP001396">
    <property type="protein sequence ID" value="ACR63031.1"/>
    <property type="molecule type" value="Genomic_DNA"/>
</dbReference>
<dbReference type="RefSeq" id="WP_000036723.1">
    <property type="nucleotide sequence ID" value="NC_012759.1"/>
</dbReference>
<dbReference type="SMR" id="C4ZZT2"/>
<dbReference type="GeneID" id="93779219"/>
<dbReference type="KEGG" id="ebw:BWG_2514"/>
<dbReference type="HOGENOM" id="CLU_031223_2_1_6"/>
<dbReference type="UniPathway" id="UPA00109">
    <property type="reaction ID" value="UER00187"/>
</dbReference>
<dbReference type="GO" id="GO:0009986">
    <property type="term" value="C:cell surface"/>
    <property type="evidence" value="ECO:0007669"/>
    <property type="project" value="UniProtKB-SubCell"/>
</dbReference>
<dbReference type="GO" id="GO:0005576">
    <property type="term" value="C:extracellular region"/>
    <property type="evidence" value="ECO:0007669"/>
    <property type="project" value="UniProtKB-SubCell"/>
</dbReference>
<dbReference type="GO" id="GO:0000015">
    <property type="term" value="C:phosphopyruvate hydratase complex"/>
    <property type="evidence" value="ECO:0007669"/>
    <property type="project" value="InterPro"/>
</dbReference>
<dbReference type="GO" id="GO:0000287">
    <property type="term" value="F:magnesium ion binding"/>
    <property type="evidence" value="ECO:0007669"/>
    <property type="project" value="UniProtKB-UniRule"/>
</dbReference>
<dbReference type="GO" id="GO:0004634">
    <property type="term" value="F:phosphopyruvate hydratase activity"/>
    <property type="evidence" value="ECO:0007669"/>
    <property type="project" value="UniProtKB-UniRule"/>
</dbReference>
<dbReference type="GO" id="GO:0006096">
    <property type="term" value="P:glycolytic process"/>
    <property type="evidence" value="ECO:0007669"/>
    <property type="project" value="UniProtKB-UniRule"/>
</dbReference>
<dbReference type="CDD" id="cd03313">
    <property type="entry name" value="enolase"/>
    <property type="match status" value="1"/>
</dbReference>
<dbReference type="FunFam" id="3.20.20.120:FF:000001">
    <property type="entry name" value="Enolase"/>
    <property type="match status" value="1"/>
</dbReference>
<dbReference type="FunFam" id="3.30.390.10:FF:000001">
    <property type="entry name" value="Enolase"/>
    <property type="match status" value="1"/>
</dbReference>
<dbReference type="Gene3D" id="3.20.20.120">
    <property type="entry name" value="Enolase-like C-terminal domain"/>
    <property type="match status" value="1"/>
</dbReference>
<dbReference type="Gene3D" id="3.30.390.10">
    <property type="entry name" value="Enolase-like, N-terminal domain"/>
    <property type="match status" value="1"/>
</dbReference>
<dbReference type="HAMAP" id="MF_00318">
    <property type="entry name" value="Enolase"/>
    <property type="match status" value="1"/>
</dbReference>
<dbReference type="InterPro" id="IPR000941">
    <property type="entry name" value="Enolase"/>
</dbReference>
<dbReference type="InterPro" id="IPR036849">
    <property type="entry name" value="Enolase-like_C_sf"/>
</dbReference>
<dbReference type="InterPro" id="IPR029017">
    <property type="entry name" value="Enolase-like_N"/>
</dbReference>
<dbReference type="InterPro" id="IPR020810">
    <property type="entry name" value="Enolase_C"/>
</dbReference>
<dbReference type="InterPro" id="IPR020809">
    <property type="entry name" value="Enolase_CS"/>
</dbReference>
<dbReference type="InterPro" id="IPR020811">
    <property type="entry name" value="Enolase_N"/>
</dbReference>
<dbReference type="NCBIfam" id="TIGR01060">
    <property type="entry name" value="eno"/>
    <property type="match status" value="1"/>
</dbReference>
<dbReference type="PANTHER" id="PTHR11902">
    <property type="entry name" value="ENOLASE"/>
    <property type="match status" value="1"/>
</dbReference>
<dbReference type="PANTHER" id="PTHR11902:SF1">
    <property type="entry name" value="ENOLASE"/>
    <property type="match status" value="1"/>
</dbReference>
<dbReference type="Pfam" id="PF00113">
    <property type="entry name" value="Enolase_C"/>
    <property type="match status" value="1"/>
</dbReference>
<dbReference type="Pfam" id="PF03952">
    <property type="entry name" value="Enolase_N"/>
    <property type="match status" value="1"/>
</dbReference>
<dbReference type="PIRSF" id="PIRSF001400">
    <property type="entry name" value="Enolase"/>
    <property type="match status" value="1"/>
</dbReference>
<dbReference type="PRINTS" id="PR00148">
    <property type="entry name" value="ENOLASE"/>
</dbReference>
<dbReference type="SFLD" id="SFLDS00001">
    <property type="entry name" value="Enolase"/>
    <property type="match status" value="1"/>
</dbReference>
<dbReference type="SFLD" id="SFLDF00002">
    <property type="entry name" value="enolase"/>
    <property type="match status" value="1"/>
</dbReference>
<dbReference type="SMART" id="SM01192">
    <property type="entry name" value="Enolase_C"/>
    <property type="match status" value="1"/>
</dbReference>
<dbReference type="SMART" id="SM01193">
    <property type="entry name" value="Enolase_N"/>
    <property type="match status" value="1"/>
</dbReference>
<dbReference type="SUPFAM" id="SSF51604">
    <property type="entry name" value="Enolase C-terminal domain-like"/>
    <property type="match status" value="1"/>
</dbReference>
<dbReference type="SUPFAM" id="SSF54826">
    <property type="entry name" value="Enolase N-terminal domain-like"/>
    <property type="match status" value="1"/>
</dbReference>
<dbReference type="PROSITE" id="PS00164">
    <property type="entry name" value="ENOLASE"/>
    <property type="match status" value="1"/>
</dbReference>
<proteinExistence type="inferred from homology"/>
<feature type="chain" id="PRO_1000205091" description="Enolase">
    <location>
        <begin position="1"/>
        <end position="432"/>
    </location>
</feature>
<feature type="active site" description="Proton donor" evidence="1">
    <location>
        <position position="209"/>
    </location>
</feature>
<feature type="active site" description="Proton acceptor" evidence="1">
    <location>
        <position position="342"/>
    </location>
</feature>
<feature type="binding site" evidence="1">
    <location>
        <position position="167"/>
    </location>
    <ligand>
        <name>(2R)-2-phosphoglycerate</name>
        <dbReference type="ChEBI" id="CHEBI:58289"/>
    </ligand>
</feature>
<feature type="binding site" evidence="1">
    <location>
        <position position="246"/>
    </location>
    <ligand>
        <name>Mg(2+)</name>
        <dbReference type="ChEBI" id="CHEBI:18420"/>
    </ligand>
</feature>
<feature type="binding site" evidence="1">
    <location>
        <position position="290"/>
    </location>
    <ligand>
        <name>Mg(2+)</name>
        <dbReference type="ChEBI" id="CHEBI:18420"/>
    </ligand>
</feature>
<feature type="binding site" evidence="1">
    <location>
        <position position="317"/>
    </location>
    <ligand>
        <name>Mg(2+)</name>
        <dbReference type="ChEBI" id="CHEBI:18420"/>
    </ligand>
</feature>
<feature type="binding site" evidence="1">
    <location>
        <position position="342"/>
    </location>
    <ligand>
        <name>(2R)-2-phosphoglycerate</name>
        <dbReference type="ChEBI" id="CHEBI:58289"/>
    </ligand>
</feature>
<feature type="binding site" evidence="1">
    <location>
        <position position="371"/>
    </location>
    <ligand>
        <name>(2R)-2-phosphoglycerate</name>
        <dbReference type="ChEBI" id="CHEBI:58289"/>
    </ligand>
</feature>
<feature type="binding site" evidence="1">
    <location>
        <position position="372"/>
    </location>
    <ligand>
        <name>(2R)-2-phosphoglycerate</name>
        <dbReference type="ChEBI" id="CHEBI:58289"/>
    </ligand>
</feature>
<feature type="binding site" evidence="1">
    <location>
        <position position="393"/>
    </location>
    <ligand>
        <name>(2R)-2-phosphoglycerate</name>
        <dbReference type="ChEBI" id="CHEBI:58289"/>
    </ligand>
</feature>
<organism>
    <name type="scientific">Escherichia coli (strain K12 / MC4100 / BW2952)</name>
    <dbReference type="NCBI Taxonomy" id="595496"/>
    <lineage>
        <taxon>Bacteria</taxon>
        <taxon>Pseudomonadati</taxon>
        <taxon>Pseudomonadota</taxon>
        <taxon>Gammaproteobacteria</taxon>
        <taxon>Enterobacterales</taxon>
        <taxon>Enterobacteriaceae</taxon>
        <taxon>Escherichia</taxon>
    </lineage>
</organism>
<comment type="function">
    <text evidence="1">Catalyzes the reversible conversion of 2-phosphoglycerate (2-PG) into phosphoenolpyruvate (PEP). It is essential for the degradation of carbohydrates via glycolysis.</text>
</comment>
<comment type="catalytic activity">
    <reaction evidence="1">
        <text>(2R)-2-phosphoglycerate = phosphoenolpyruvate + H2O</text>
        <dbReference type="Rhea" id="RHEA:10164"/>
        <dbReference type="ChEBI" id="CHEBI:15377"/>
        <dbReference type="ChEBI" id="CHEBI:58289"/>
        <dbReference type="ChEBI" id="CHEBI:58702"/>
        <dbReference type="EC" id="4.2.1.11"/>
    </reaction>
</comment>
<comment type="cofactor">
    <cofactor evidence="1">
        <name>Mg(2+)</name>
        <dbReference type="ChEBI" id="CHEBI:18420"/>
    </cofactor>
    <text evidence="1">Binds a second Mg(2+) ion via substrate during catalysis.</text>
</comment>
<comment type="pathway">
    <text evidence="1">Carbohydrate degradation; glycolysis; pyruvate from D-glyceraldehyde 3-phosphate: step 4/5.</text>
</comment>
<comment type="subunit">
    <text evidence="1">Component of the RNA degradosome, a multiprotein complex involved in RNA processing and mRNA degradation.</text>
</comment>
<comment type="subcellular location">
    <subcellularLocation>
        <location evidence="1">Cytoplasm</location>
    </subcellularLocation>
    <subcellularLocation>
        <location evidence="1">Secreted</location>
    </subcellularLocation>
    <subcellularLocation>
        <location evidence="1">Cell surface</location>
    </subcellularLocation>
    <text evidence="1">Fractions of enolase are present in both the cytoplasm and on the cell surface.</text>
</comment>
<comment type="similarity">
    <text evidence="1">Belongs to the enolase family.</text>
</comment>
<keyword id="KW-0963">Cytoplasm</keyword>
<keyword id="KW-0324">Glycolysis</keyword>
<keyword id="KW-0456">Lyase</keyword>
<keyword id="KW-0460">Magnesium</keyword>
<keyword id="KW-0479">Metal-binding</keyword>
<keyword id="KW-0964">Secreted</keyword>
<accession>C4ZZT2</accession>
<evidence type="ECO:0000255" key="1">
    <source>
        <dbReference type="HAMAP-Rule" id="MF_00318"/>
    </source>
</evidence>
<gene>
    <name evidence="1" type="primary">eno</name>
    <name type="ordered locus">BWG_2514</name>
</gene>
<protein>
    <recommendedName>
        <fullName evidence="1">Enolase</fullName>
        <ecNumber evidence="1">4.2.1.11</ecNumber>
    </recommendedName>
    <alternativeName>
        <fullName evidence="1">2-phospho-D-glycerate hydro-lyase</fullName>
    </alternativeName>
    <alternativeName>
        <fullName evidence="1">2-phosphoglycerate dehydratase</fullName>
    </alternativeName>
</protein>